<comment type="function">
    <text evidence="1">Nucleoside triphosphate pyrophosphatase that hydrolyzes dTTP and UTP. May have a dual role in cell division arrest and in preventing the incorporation of modified nucleotides into cellular nucleic acids.</text>
</comment>
<comment type="catalytic activity">
    <reaction evidence="1">
        <text>dTTP + H2O = dTMP + diphosphate + H(+)</text>
        <dbReference type="Rhea" id="RHEA:28534"/>
        <dbReference type="ChEBI" id="CHEBI:15377"/>
        <dbReference type="ChEBI" id="CHEBI:15378"/>
        <dbReference type="ChEBI" id="CHEBI:33019"/>
        <dbReference type="ChEBI" id="CHEBI:37568"/>
        <dbReference type="ChEBI" id="CHEBI:63528"/>
        <dbReference type="EC" id="3.6.1.9"/>
    </reaction>
</comment>
<comment type="catalytic activity">
    <reaction evidence="1">
        <text>UTP + H2O = UMP + diphosphate + H(+)</text>
        <dbReference type="Rhea" id="RHEA:29395"/>
        <dbReference type="ChEBI" id="CHEBI:15377"/>
        <dbReference type="ChEBI" id="CHEBI:15378"/>
        <dbReference type="ChEBI" id="CHEBI:33019"/>
        <dbReference type="ChEBI" id="CHEBI:46398"/>
        <dbReference type="ChEBI" id="CHEBI:57865"/>
        <dbReference type="EC" id="3.6.1.9"/>
    </reaction>
</comment>
<comment type="cofactor">
    <cofactor evidence="1">
        <name>a divalent metal cation</name>
        <dbReference type="ChEBI" id="CHEBI:60240"/>
    </cofactor>
</comment>
<comment type="subcellular location">
    <subcellularLocation>
        <location evidence="1">Cytoplasm</location>
    </subcellularLocation>
</comment>
<comment type="similarity">
    <text evidence="1">Belongs to the Maf family. YhdE subfamily.</text>
</comment>
<proteinExistence type="inferred from homology"/>
<gene>
    <name type="ordered locus">CCA_00314</name>
</gene>
<dbReference type="EC" id="3.6.1.9" evidence="1"/>
<dbReference type="EMBL" id="AE015925">
    <property type="protein sequence ID" value="AAP05063.1"/>
    <property type="molecule type" value="Genomic_DNA"/>
</dbReference>
<dbReference type="RefSeq" id="WP_011006281.1">
    <property type="nucleotide sequence ID" value="NC_003361.3"/>
</dbReference>
<dbReference type="SMR" id="Q823U1"/>
<dbReference type="STRING" id="227941.CCA_00314"/>
<dbReference type="KEGG" id="cca:CCA_00314"/>
<dbReference type="eggNOG" id="COG0424">
    <property type="taxonomic scope" value="Bacteria"/>
</dbReference>
<dbReference type="HOGENOM" id="CLU_040416_0_0_0"/>
<dbReference type="OrthoDB" id="9807767at2"/>
<dbReference type="Proteomes" id="UP000002193">
    <property type="component" value="Chromosome"/>
</dbReference>
<dbReference type="GO" id="GO:0005737">
    <property type="term" value="C:cytoplasm"/>
    <property type="evidence" value="ECO:0007669"/>
    <property type="project" value="UniProtKB-SubCell"/>
</dbReference>
<dbReference type="GO" id="GO:0036218">
    <property type="term" value="F:dTTP diphosphatase activity"/>
    <property type="evidence" value="ECO:0007669"/>
    <property type="project" value="RHEA"/>
</dbReference>
<dbReference type="GO" id="GO:0036221">
    <property type="term" value="F:UTP diphosphatase activity"/>
    <property type="evidence" value="ECO:0007669"/>
    <property type="project" value="RHEA"/>
</dbReference>
<dbReference type="GO" id="GO:0009117">
    <property type="term" value="P:nucleotide metabolic process"/>
    <property type="evidence" value="ECO:0007669"/>
    <property type="project" value="UniProtKB-KW"/>
</dbReference>
<dbReference type="CDD" id="cd00555">
    <property type="entry name" value="Maf"/>
    <property type="match status" value="1"/>
</dbReference>
<dbReference type="Gene3D" id="3.90.950.10">
    <property type="match status" value="1"/>
</dbReference>
<dbReference type="HAMAP" id="MF_00528">
    <property type="entry name" value="Maf"/>
    <property type="match status" value="1"/>
</dbReference>
<dbReference type="InterPro" id="IPR029001">
    <property type="entry name" value="ITPase-like_fam"/>
</dbReference>
<dbReference type="InterPro" id="IPR003697">
    <property type="entry name" value="Maf-like"/>
</dbReference>
<dbReference type="NCBIfam" id="TIGR00172">
    <property type="entry name" value="maf"/>
    <property type="match status" value="1"/>
</dbReference>
<dbReference type="PANTHER" id="PTHR43213">
    <property type="entry name" value="BIFUNCTIONAL DTTP/UTP PYROPHOSPHATASE/METHYLTRANSFERASE PROTEIN-RELATED"/>
    <property type="match status" value="1"/>
</dbReference>
<dbReference type="PANTHER" id="PTHR43213:SF5">
    <property type="entry name" value="BIFUNCTIONAL DTTP_UTP PYROPHOSPHATASE_METHYLTRANSFERASE PROTEIN-RELATED"/>
    <property type="match status" value="1"/>
</dbReference>
<dbReference type="Pfam" id="PF02545">
    <property type="entry name" value="Maf"/>
    <property type="match status" value="1"/>
</dbReference>
<dbReference type="PIRSF" id="PIRSF006305">
    <property type="entry name" value="Maf"/>
    <property type="match status" value="1"/>
</dbReference>
<dbReference type="SUPFAM" id="SSF52972">
    <property type="entry name" value="ITPase-like"/>
    <property type="match status" value="1"/>
</dbReference>
<keyword id="KW-0963">Cytoplasm</keyword>
<keyword id="KW-0378">Hydrolase</keyword>
<keyword id="KW-0546">Nucleotide metabolism</keyword>
<accession>Q823U1</accession>
<organism>
    <name type="scientific">Chlamydia caviae (strain ATCC VR-813 / DSM 19441 / 03DC25 / GPIC)</name>
    <name type="common">Chlamydophila caviae</name>
    <dbReference type="NCBI Taxonomy" id="227941"/>
    <lineage>
        <taxon>Bacteria</taxon>
        <taxon>Pseudomonadati</taxon>
        <taxon>Chlamydiota</taxon>
        <taxon>Chlamydiia</taxon>
        <taxon>Chlamydiales</taxon>
        <taxon>Chlamydiaceae</taxon>
        <taxon>Chlamydia/Chlamydophila group</taxon>
        <taxon>Chlamydia</taxon>
    </lineage>
</organism>
<feature type="chain" id="PRO_0000123007" description="dTTP/UTP pyrophosphatase">
    <location>
        <begin position="1"/>
        <end position="196"/>
    </location>
</feature>
<feature type="active site" description="Proton acceptor" evidence="1">
    <location>
        <position position="72"/>
    </location>
</feature>
<feature type="site" description="Important for substrate specificity" evidence="1">
    <location>
        <position position="13"/>
    </location>
</feature>
<feature type="site" description="Important for substrate specificity" evidence="1">
    <location>
        <position position="73"/>
    </location>
</feature>
<feature type="site" description="Important for substrate specificity" evidence="1">
    <location>
        <position position="155"/>
    </location>
</feature>
<protein>
    <recommendedName>
        <fullName evidence="1">dTTP/UTP pyrophosphatase</fullName>
        <shortName evidence="1">dTTPase/UTPase</shortName>
        <ecNumber evidence="1">3.6.1.9</ecNumber>
    </recommendedName>
    <alternativeName>
        <fullName evidence="1">Nucleoside triphosphate pyrophosphatase</fullName>
    </alternativeName>
    <alternativeName>
        <fullName evidence="1">Nucleotide pyrophosphatase</fullName>
        <shortName evidence="1">Nucleotide PPase</shortName>
    </alternativeName>
</protein>
<evidence type="ECO:0000255" key="1">
    <source>
        <dbReference type="HAMAP-Rule" id="MF_00528"/>
    </source>
</evidence>
<sequence length="196" mass="21891">MEPQLILGSSSPRRKSILQYFRIPFTCISPSFEERSVPYQGDPAAYSQELAVGKAESIVQDHNPEGVILTADTVVIYKGKVFNKPSSRDEAIEMLKTLSGQTHSIITSVALLQQKKLMVGQETTQVTFNQLPEKYLGRYVEAFSTLDKCGGYSTQEGGGLIIHNIQGCAYNVQGLPIRTLYHLLLEFDINLWDYLV</sequence>
<reference key="1">
    <citation type="journal article" date="2003" name="Nucleic Acids Res.">
        <title>Genome sequence of Chlamydophila caviae (Chlamydia psittaci GPIC): examining the role of niche-specific genes in the evolution of the Chlamydiaceae.</title>
        <authorList>
            <person name="Read T.D."/>
            <person name="Myers G.S.A."/>
            <person name="Brunham R.C."/>
            <person name="Nelson W.C."/>
            <person name="Paulsen I.T."/>
            <person name="Heidelberg J.F."/>
            <person name="Holtzapple E.K."/>
            <person name="Khouri H.M."/>
            <person name="Federova N.B."/>
            <person name="Carty H.A."/>
            <person name="Umayam L.A."/>
            <person name="Haft D.H."/>
            <person name="Peterson J.D."/>
            <person name="Beanan M.J."/>
            <person name="White O."/>
            <person name="Salzberg S.L."/>
            <person name="Hsia R.-C."/>
            <person name="McClarty G."/>
            <person name="Rank R.G."/>
            <person name="Bavoil P.M."/>
            <person name="Fraser C.M."/>
        </authorList>
    </citation>
    <scope>NUCLEOTIDE SEQUENCE [LARGE SCALE GENOMIC DNA]</scope>
    <source>
        <strain>ATCC VR-813 / DSM 19441 / 03DC25 / GPIC</strain>
    </source>
</reference>
<name>NTPPA_CHLCV</name>